<organism>
    <name type="scientific">Cronobacter sakazakii (strain ATCC BAA-894)</name>
    <name type="common">Enterobacter sakazakii</name>
    <dbReference type="NCBI Taxonomy" id="290339"/>
    <lineage>
        <taxon>Bacteria</taxon>
        <taxon>Pseudomonadati</taxon>
        <taxon>Pseudomonadota</taxon>
        <taxon>Gammaproteobacteria</taxon>
        <taxon>Enterobacterales</taxon>
        <taxon>Enterobacteriaceae</taxon>
        <taxon>Cronobacter</taxon>
    </lineage>
</organism>
<feature type="chain" id="PRO_1000123715" description="Tetraacyldisaccharide 4'-kinase">
    <location>
        <begin position="1"/>
        <end position="325"/>
    </location>
</feature>
<feature type="binding site" evidence="1">
    <location>
        <begin position="55"/>
        <end position="62"/>
    </location>
    <ligand>
        <name>ATP</name>
        <dbReference type="ChEBI" id="CHEBI:30616"/>
    </ligand>
</feature>
<dbReference type="EC" id="2.7.1.130" evidence="1"/>
<dbReference type="EMBL" id="CP000783">
    <property type="protein sequence ID" value="ABU77675.1"/>
    <property type="molecule type" value="Genomic_DNA"/>
</dbReference>
<dbReference type="RefSeq" id="WP_012125211.1">
    <property type="nucleotide sequence ID" value="NC_009778.1"/>
</dbReference>
<dbReference type="SMR" id="A7MET8"/>
<dbReference type="KEGG" id="esa:ESA_02429"/>
<dbReference type="PATRIC" id="fig|290339.8.peg.2159"/>
<dbReference type="HOGENOM" id="CLU_038816_2_0_6"/>
<dbReference type="UniPathway" id="UPA00359">
    <property type="reaction ID" value="UER00482"/>
</dbReference>
<dbReference type="Proteomes" id="UP000000260">
    <property type="component" value="Chromosome"/>
</dbReference>
<dbReference type="GO" id="GO:0005886">
    <property type="term" value="C:plasma membrane"/>
    <property type="evidence" value="ECO:0007669"/>
    <property type="project" value="TreeGrafter"/>
</dbReference>
<dbReference type="GO" id="GO:0005524">
    <property type="term" value="F:ATP binding"/>
    <property type="evidence" value="ECO:0007669"/>
    <property type="project" value="UniProtKB-UniRule"/>
</dbReference>
<dbReference type="GO" id="GO:0009029">
    <property type="term" value="F:tetraacyldisaccharide 4'-kinase activity"/>
    <property type="evidence" value="ECO:0007669"/>
    <property type="project" value="UniProtKB-UniRule"/>
</dbReference>
<dbReference type="GO" id="GO:0009245">
    <property type="term" value="P:lipid A biosynthetic process"/>
    <property type="evidence" value="ECO:0007669"/>
    <property type="project" value="UniProtKB-UniRule"/>
</dbReference>
<dbReference type="GO" id="GO:0009244">
    <property type="term" value="P:lipopolysaccharide core region biosynthetic process"/>
    <property type="evidence" value="ECO:0007669"/>
    <property type="project" value="TreeGrafter"/>
</dbReference>
<dbReference type="HAMAP" id="MF_00409">
    <property type="entry name" value="LpxK"/>
    <property type="match status" value="1"/>
</dbReference>
<dbReference type="InterPro" id="IPR003758">
    <property type="entry name" value="LpxK"/>
</dbReference>
<dbReference type="InterPro" id="IPR027417">
    <property type="entry name" value="P-loop_NTPase"/>
</dbReference>
<dbReference type="NCBIfam" id="TIGR00682">
    <property type="entry name" value="lpxK"/>
    <property type="match status" value="1"/>
</dbReference>
<dbReference type="PANTHER" id="PTHR42724">
    <property type="entry name" value="TETRAACYLDISACCHARIDE 4'-KINASE"/>
    <property type="match status" value="1"/>
</dbReference>
<dbReference type="PANTHER" id="PTHR42724:SF1">
    <property type="entry name" value="TETRAACYLDISACCHARIDE 4'-KINASE, MITOCHONDRIAL-RELATED"/>
    <property type="match status" value="1"/>
</dbReference>
<dbReference type="Pfam" id="PF02606">
    <property type="entry name" value="LpxK"/>
    <property type="match status" value="1"/>
</dbReference>
<dbReference type="SUPFAM" id="SSF52540">
    <property type="entry name" value="P-loop containing nucleoside triphosphate hydrolases"/>
    <property type="match status" value="1"/>
</dbReference>
<accession>A7MET8</accession>
<sequence length="325" mass="35205">MIERIWSGCSLLWVLLLPLSWLYGLISGAIRLSYQLGLRKAWRAPVPVVVVGNLTAGGNGKTPVVVWLVEQLQQRGIRAGVVSRGYGGKAAHYPLVLNDATTPAEAGDEPVLIYQRTGAPVAVSANRAEAVQALMGHATPQIIITDDGLQHYALARDKEIVVVDGVRRFGNGWWLPAGPMRERASRLKQVDAVITNGGEARSGEIAMQLNPGLAVNLRSGEKRPVNTLNNVVAMAGIGHPPRFFATLEKCGLTPVKTVSLADHQALREADVLALLSEGQSLLMTEKDAVKCRAFAHDNWWYLPVDATLAQPQADQLLKDILTLVR</sequence>
<comment type="function">
    <text evidence="1">Transfers the gamma-phosphate of ATP to the 4'-position of a tetraacyldisaccharide 1-phosphate intermediate (termed DS-1-P) to form tetraacyldisaccharide 1,4'-bis-phosphate (lipid IVA).</text>
</comment>
<comment type="catalytic activity">
    <reaction evidence="1">
        <text>a lipid A disaccharide + ATP = a lipid IVA + ADP + H(+)</text>
        <dbReference type="Rhea" id="RHEA:67840"/>
        <dbReference type="ChEBI" id="CHEBI:15378"/>
        <dbReference type="ChEBI" id="CHEBI:30616"/>
        <dbReference type="ChEBI" id="CHEBI:176343"/>
        <dbReference type="ChEBI" id="CHEBI:176425"/>
        <dbReference type="ChEBI" id="CHEBI:456216"/>
        <dbReference type="EC" id="2.7.1.130"/>
    </reaction>
</comment>
<comment type="pathway">
    <text evidence="1">Glycolipid biosynthesis; lipid IV(A) biosynthesis; lipid IV(A) from (3R)-3-hydroxytetradecanoyl-[acyl-carrier-protein] and UDP-N-acetyl-alpha-D-glucosamine: step 6/6.</text>
</comment>
<comment type="similarity">
    <text evidence="1">Belongs to the LpxK family.</text>
</comment>
<protein>
    <recommendedName>
        <fullName evidence="1">Tetraacyldisaccharide 4'-kinase</fullName>
        <ecNumber evidence="1">2.7.1.130</ecNumber>
    </recommendedName>
    <alternativeName>
        <fullName evidence="1">Lipid A 4'-kinase</fullName>
    </alternativeName>
</protein>
<name>LPXK_CROS8</name>
<keyword id="KW-0067">ATP-binding</keyword>
<keyword id="KW-0418">Kinase</keyword>
<keyword id="KW-0441">Lipid A biosynthesis</keyword>
<keyword id="KW-0444">Lipid biosynthesis</keyword>
<keyword id="KW-0443">Lipid metabolism</keyword>
<keyword id="KW-0547">Nucleotide-binding</keyword>
<keyword id="KW-1185">Reference proteome</keyword>
<keyword id="KW-0808">Transferase</keyword>
<reference key="1">
    <citation type="journal article" date="2010" name="PLoS ONE">
        <title>Genome sequence of Cronobacter sakazakii BAA-894 and comparative genomic hybridization analysis with other Cronobacter species.</title>
        <authorList>
            <person name="Kucerova E."/>
            <person name="Clifton S.W."/>
            <person name="Xia X.Q."/>
            <person name="Long F."/>
            <person name="Porwollik S."/>
            <person name="Fulton L."/>
            <person name="Fronick C."/>
            <person name="Minx P."/>
            <person name="Kyung K."/>
            <person name="Warren W."/>
            <person name="Fulton R."/>
            <person name="Feng D."/>
            <person name="Wollam A."/>
            <person name="Shah N."/>
            <person name="Bhonagiri V."/>
            <person name="Nash W.E."/>
            <person name="Hallsworth-Pepin K."/>
            <person name="Wilson R.K."/>
            <person name="McClelland M."/>
            <person name="Forsythe S.J."/>
        </authorList>
    </citation>
    <scope>NUCLEOTIDE SEQUENCE [LARGE SCALE GENOMIC DNA]</scope>
    <source>
        <strain>ATCC BAA-894</strain>
    </source>
</reference>
<proteinExistence type="inferred from homology"/>
<gene>
    <name evidence="1" type="primary">lpxK</name>
    <name type="ordered locus">ESA_02429</name>
</gene>
<evidence type="ECO:0000255" key="1">
    <source>
        <dbReference type="HAMAP-Rule" id="MF_00409"/>
    </source>
</evidence>